<comment type="function">
    <text evidence="1">Catalyzes the reversible conversion of ribose-5-phosphate to ribulose 5-phosphate.</text>
</comment>
<comment type="catalytic activity">
    <reaction evidence="1">
        <text>aldehydo-D-ribose 5-phosphate = D-ribulose 5-phosphate</text>
        <dbReference type="Rhea" id="RHEA:14657"/>
        <dbReference type="ChEBI" id="CHEBI:58121"/>
        <dbReference type="ChEBI" id="CHEBI:58273"/>
        <dbReference type="EC" id="5.3.1.6"/>
    </reaction>
</comment>
<comment type="pathway">
    <text evidence="1">Carbohydrate degradation; pentose phosphate pathway; D-ribose 5-phosphate from D-ribulose 5-phosphate (non-oxidative stage): step 1/1.</text>
</comment>
<comment type="subunit">
    <text evidence="1">Homodimer.</text>
</comment>
<comment type="similarity">
    <text evidence="1">Belongs to the ribose 5-phosphate isomerase family.</text>
</comment>
<organism>
    <name type="scientific">Shewanella sp. (strain MR-7)</name>
    <dbReference type="NCBI Taxonomy" id="60481"/>
    <lineage>
        <taxon>Bacteria</taxon>
        <taxon>Pseudomonadati</taxon>
        <taxon>Pseudomonadota</taxon>
        <taxon>Gammaproteobacteria</taxon>
        <taxon>Alteromonadales</taxon>
        <taxon>Shewanellaceae</taxon>
        <taxon>Shewanella</taxon>
    </lineage>
</organism>
<protein>
    <recommendedName>
        <fullName evidence="1">Ribose-5-phosphate isomerase A</fullName>
        <ecNumber evidence="1">5.3.1.6</ecNumber>
    </recommendedName>
    <alternativeName>
        <fullName evidence="1">Phosphoriboisomerase A</fullName>
        <shortName evidence="1">PRI</shortName>
    </alternativeName>
</protein>
<keyword id="KW-0413">Isomerase</keyword>
<dbReference type="EC" id="5.3.1.6" evidence="1"/>
<dbReference type="EMBL" id="CP000444">
    <property type="protein sequence ID" value="ABI42011.1"/>
    <property type="molecule type" value="Genomic_DNA"/>
</dbReference>
<dbReference type="SMR" id="Q0HXZ4"/>
<dbReference type="KEGG" id="shm:Shewmr7_1012"/>
<dbReference type="HOGENOM" id="CLU_056590_1_1_6"/>
<dbReference type="UniPathway" id="UPA00115">
    <property type="reaction ID" value="UER00412"/>
</dbReference>
<dbReference type="GO" id="GO:0005829">
    <property type="term" value="C:cytosol"/>
    <property type="evidence" value="ECO:0007669"/>
    <property type="project" value="TreeGrafter"/>
</dbReference>
<dbReference type="GO" id="GO:0004751">
    <property type="term" value="F:ribose-5-phosphate isomerase activity"/>
    <property type="evidence" value="ECO:0007669"/>
    <property type="project" value="UniProtKB-UniRule"/>
</dbReference>
<dbReference type="GO" id="GO:0006014">
    <property type="term" value="P:D-ribose metabolic process"/>
    <property type="evidence" value="ECO:0007669"/>
    <property type="project" value="TreeGrafter"/>
</dbReference>
<dbReference type="GO" id="GO:0009052">
    <property type="term" value="P:pentose-phosphate shunt, non-oxidative branch"/>
    <property type="evidence" value="ECO:0007669"/>
    <property type="project" value="UniProtKB-UniRule"/>
</dbReference>
<dbReference type="CDD" id="cd01398">
    <property type="entry name" value="RPI_A"/>
    <property type="match status" value="1"/>
</dbReference>
<dbReference type="FunFam" id="3.30.70.260:FF:000004">
    <property type="entry name" value="Ribose-5-phosphate isomerase A"/>
    <property type="match status" value="1"/>
</dbReference>
<dbReference type="FunFam" id="3.40.50.1360:FF:000001">
    <property type="entry name" value="Ribose-5-phosphate isomerase A"/>
    <property type="match status" value="1"/>
</dbReference>
<dbReference type="Gene3D" id="3.30.70.260">
    <property type="match status" value="1"/>
</dbReference>
<dbReference type="Gene3D" id="3.40.50.1360">
    <property type="match status" value="1"/>
</dbReference>
<dbReference type="HAMAP" id="MF_00170">
    <property type="entry name" value="Rib_5P_isom_A"/>
    <property type="match status" value="1"/>
</dbReference>
<dbReference type="InterPro" id="IPR037171">
    <property type="entry name" value="NagB/RpiA_transferase-like"/>
</dbReference>
<dbReference type="InterPro" id="IPR020672">
    <property type="entry name" value="Ribose5P_isomerase_typA_subgr"/>
</dbReference>
<dbReference type="InterPro" id="IPR004788">
    <property type="entry name" value="Ribose5P_isomerase_type_A"/>
</dbReference>
<dbReference type="NCBIfam" id="NF001924">
    <property type="entry name" value="PRK00702.1"/>
    <property type="match status" value="1"/>
</dbReference>
<dbReference type="NCBIfam" id="TIGR00021">
    <property type="entry name" value="rpiA"/>
    <property type="match status" value="1"/>
</dbReference>
<dbReference type="PANTHER" id="PTHR11934">
    <property type="entry name" value="RIBOSE-5-PHOSPHATE ISOMERASE"/>
    <property type="match status" value="1"/>
</dbReference>
<dbReference type="PANTHER" id="PTHR11934:SF0">
    <property type="entry name" value="RIBOSE-5-PHOSPHATE ISOMERASE"/>
    <property type="match status" value="1"/>
</dbReference>
<dbReference type="Pfam" id="PF06026">
    <property type="entry name" value="Rib_5-P_isom_A"/>
    <property type="match status" value="1"/>
</dbReference>
<dbReference type="SUPFAM" id="SSF75445">
    <property type="entry name" value="D-ribose-5-phosphate isomerase (RpiA), lid domain"/>
    <property type="match status" value="1"/>
</dbReference>
<dbReference type="SUPFAM" id="SSF100950">
    <property type="entry name" value="NagB/RpiA/CoA transferase-like"/>
    <property type="match status" value="1"/>
</dbReference>
<evidence type="ECO:0000255" key="1">
    <source>
        <dbReference type="HAMAP-Rule" id="MF_00170"/>
    </source>
</evidence>
<accession>Q0HXZ4</accession>
<gene>
    <name evidence="1" type="primary">rpiA</name>
    <name type="ordered locus">Shewmr7_1012</name>
</gene>
<sequence length="219" mass="23313">MTQDEMKKAAGWAALKYVEKDSIVGVGTGSTVNHFIDALATMKADIEGAVSSSEASTQKMKALGIPVYDLNSVDKLSVYVDGADEINGHMDMIKGGGAALTREKIVAAVAEKFVCIVDNTKQVDILGEFPLPVEVIPMARSYVARELVKLGGDPVYREGVVTDNGNVILDVYNLKIINPKELEEKINAIVGVVTNGLFAKRGADVLLVGTPEGVKTFTA</sequence>
<proteinExistence type="inferred from homology"/>
<name>RPIA_SHESR</name>
<feature type="chain" id="PRO_1000016995" description="Ribose-5-phosphate isomerase A">
    <location>
        <begin position="1"/>
        <end position="219"/>
    </location>
</feature>
<feature type="active site" description="Proton acceptor" evidence="1">
    <location>
        <position position="103"/>
    </location>
</feature>
<feature type="binding site" evidence="1">
    <location>
        <begin position="28"/>
        <end position="31"/>
    </location>
    <ligand>
        <name>substrate</name>
    </ligand>
</feature>
<feature type="binding site" evidence="1">
    <location>
        <begin position="81"/>
        <end position="84"/>
    </location>
    <ligand>
        <name>substrate</name>
    </ligand>
</feature>
<feature type="binding site" evidence="1">
    <location>
        <begin position="94"/>
        <end position="97"/>
    </location>
    <ligand>
        <name>substrate</name>
    </ligand>
</feature>
<feature type="binding site" evidence="1">
    <location>
        <position position="121"/>
    </location>
    <ligand>
        <name>substrate</name>
    </ligand>
</feature>
<reference key="1">
    <citation type="submission" date="2006-08" db="EMBL/GenBank/DDBJ databases">
        <title>Complete sequence of chromosome 1 of Shewanella sp. MR-7.</title>
        <authorList>
            <person name="Copeland A."/>
            <person name="Lucas S."/>
            <person name="Lapidus A."/>
            <person name="Barry K."/>
            <person name="Detter J.C."/>
            <person name="Glavina del Rio T."/>
            <person name="Hammon N."/>
            <person name="Israni S."/>
            <person name="Dalin E."/>
            <person name="Tice H."/>
            <person name="Pitluck S."/>
            <person name="Kiss H."/>
            <person name="Brettin T."/>
            <person name="Bruce D."/>
            <person name="Han C."/>
            <person name="Tapia R."/>
            <person name="Gilna P."/>
            <person name="Schmutz J."/>
            <person name="Larimer F."/>
            <person name="Land M."/>
            <person name="Hauser L."/>
            <person name="Kyrpides N."/>
            <person name="Mikhailova N."/>
            <person name="Nealson K."/>
            <person name="Konstantinidis K."/>
            <person name="Klappenbach J."/>
            <person name="Tiedje J."/>
            <person name="Richardson P."/>
        </authorList>
    </citation>
    <scope>NUCLEOTIDE SEQUENCE [LARGE SCALE GENOMIC DNA]</scope>
    <source>
        <strain>MR-7</strain>
    </source>
</reference>